<protein>
    <recommendedName>
        <fullName evidence="2">Small ribosomal subunit protein uS14</fullName>
    </recommendedName>
    <alternativeName>
        <fullName>40S ribosomal protein S29A</fullName>
    </alternativeName>
</protein>
<organism>
    <name type="scientific">Candida albicans (strain SC5314 / ATCC MYA-2876)</name>
    <name type="common">Yeast</name>
    <dbReference type="NCBI Taxonomy" id="237561"/>
    <lineage>
        <taxon>Eukaryota</taxon>
        <taxon>Fungi</taxon>
        <taxon>Dikarya</taxon>
        <taxon>Ascomycota</taxon>
        <taxon>Saccharomycotina</taxon>
        <taxon>Pichiomycetes</taxon>
        <taxon>Debaryomycetaceae</taxon>
        <taxon>Candida/Lodderomyces clade</taxon>
        <taxon>Candida</taxon>
    </lineage>
</organism>
<comment type="function">
    <text evidence="4">Component of the ribosome, a large ribonucleoprotein complex responsible for the synthesis of proteins in the cell. The small ribosomal subunit (SSU) binds messenger RNAs (mRNAs) and translates the encoded message by selecting cognate aminoacyl-transfer RNA (tRNA) molecules. The large subunit (LSU) contains the ribosomal catalytic site termed the peptidyl transferase center (PTC), which catalyzes the formation of peptide bonds, thereby polymerizing the amino acids delivered by tRNAs into a polypeptide chain. The nascent polypeptides leave the ribosome through a tunnel in the LSU and interact with protein factors that function in enzymatic processing, targeting, and the membrane insertion of nascent chains at the exit of the ribosomal tunnel.</text>
</comment>
<comment type="cofactor">
    <cofactor evidence="1">
        <name>Zn(2+)</name>
        <dbReference type="ChEBI" id="CHEBI:29105"/>
    </cofactor>
</comment>
<comment type="subunit">
    <text evidence="1">Component of the small ribosomal subunit (PubMed:35613268). Mature ribosomes consist of a small (40S) and a large (60S) subunit (PubMed:35613268). The 40S subunit contains about 32 different proteins and 1 molecule of RNA (18S) (PubMed:35613268). The 60S subunit contains 45 different proteins and 3 molecules of RNA (25S, 5.8S and 5S) (PubMed:35613268).</text>
</comment>
<comment type="subcellular location">
    <subcellularLocation>
        <location evidence="4">Cytoplasm</location>
    </subcellularLocation>
</comment>
<comment type="similarity">
    <text evidence="3">Belongs to the universal ribosomal protein uS14 family.</text>
</comment>
<feature type="chain" id="PRO_0000456566" description="Small ribosomal subunit protein uS14">
    <location>
        <begin position="1"/>
        <end position="56"/>
    </location>
</feature>
<feature type="binding site" evidence="1 5">
    <location>
        <position position="21"/>
    </location>
    <ligand>
        <name>Zn(2+)</name>
        <dbReference type="ChEBI" id="CHEBI:29105"/>
        <label>101</label>
    </ligand>
</feature>
<feature type="binding site" evidence="1 5">
    <location>
        <position position="24"/>
    </location>
    <ligand>
        <name>Zn(2+)</name>
        <dbReference type="ChEBI" id="CHEBI:29105"/>
        <label>101</label>
    </ligand>
</feature>
<feature type="binding site" evidence="1 5">
    <location>
        <position position="39"/>
    </location>
    <ligand>
        <name>Zn(2+)</name>
        <dbReference type="ChEBI" id="CHEBI:29105"/>
        <label>101</label>
    </ligand>
</feature>
<feature type="binding site" evidence="1 5">
    <location>
        <position position="42"/>
    </location>
    <ligand>
        <name>Zn(2+)</name>
        <dbReference type="ChEBI" id="CHEBI:29105"/>
        <label>101</label>
    </ligand>
</feature>
<dbReference type="EMBL" id="CP017630">
    <property type="protein sequence ID" value="AOW31528.1"/>
    <property type="molecule type" value="Genomic_DNA"/>
</dbReference>
<dbReference type="RefSeq" id="XP_019331108.1">
    <property type="nucleotide sequence ID" value="XM_019475563.1"/>
</dbReference>
<dbReference type="PDB" id="7PZY">
    <property type="method" value="EM"/>
    <property type="resolution" value="2.32 A"/>
    <property type="chains" value="e=1-56"/>
</dbReference>
<dbReference type="PDB" id="7Q08">
    <property type="method" value="EM"/>
    <property type="resolution" value="2.56 A"/>
    <property type="chains" value="e=1-56"/>
</dbReference>
<dbReference type="PDB" id="7Q0F">
    <property type="method" value="EM"/>
    <property type="resolution" value="2.64 A"/>
    <property type="chains" value="e=1-56"/>
</dbReference>
<dbReference type="PDB" id="7Q0P">
    <property type="method" value="EM"/>
    <property type="resolution" value="2.77 A"/>
    <property type="chains" value="e=1-56"/>
</dbReference>
<dbReference type="PDB" id="7Q0R">
    <property type="method" value="EM"/>
    <property type="resolution" value="2.67 A"/>
    <property type="chains" value="e=1-56"/>
</dbReference>
<dbReference type="PDB" id="8C3A">
    <property type="method" value="X-ray"/>
    <property type="resolution" value="3.00 A"/>
    <property type="chains" value="DQ/f=1-56"/>
</dbReference>
<dbReference type="PDB" id="8CQ7">
    <property type="method" value="X-ray"/>
    <property type="resolution" value="3.20 A"/>
    <property type="chains" value="DQ/f=1-56"/>
</dbReference>
<dbReference type="PDB" id="8CQW">
    <property type="method" value="X-ray"/>
    <property type="resolution" value="3.05 A"/>
    <property type="chains" value="DQ/f=1-56"/>
</dbReference>
<dbReference type="PDB" id="8CRE">
    <property type="method" value="X-ray"/>
    <property type="resolution" value="3.00 A"/>
    <property type="chains" value="DQ/f=1-56"/>
</dbReference>
<dbReference type="PDB" id="8OEQ">
    <property type="method" value="X-ray"/>
    <property type="resolution" value="3.30 A"/>
    <property type="chains" value="DQ/f=1-56"/>
</dbReference>
<dbReference type="PDB" id="8OGJ">
    <property type="method" value="EM"/>
    <property type="resolution" value="3.10 A"/>
    <property type="chains" value="e=1-56"/>
</dbReference>
<dbReference type="PDB" id="8OH6">
    <property type="method" value="X-ray"/>
    <property type="resolution" value="3.35 A"/>
    <property type="chains" value="DQ/f=1-56"/>
</dbReference>
<dbReference type="PDB" id="8OI5">
    <property type="method" value="X-ray"/>
    <property type="resolution" value="2.90 A"/>
    <property type="chains" value="DQ/f=1-56"/>
</dbReference>
<dbReference type="PDB" id="8OJ3">
    <property type="method" value="X-ray"/>
    <property type="resolution" value="3.50 A"/>
    <property type="chains" value="DQ/f=1-56"/>
</dbReference>
<dbReference type="PDB" id="8Q5I">
    <property type="method" value="EM"/>
    <property type="resolution" value="2.45 A"/>
    <property type="chains" value="e=1-56"/>
</dbReference>
<dbReference type="PDBsum" id="7PZY"/>
<dbReference type="PDBsum" id="7Q08"/>
<dbReference type="PDBsum" id="7Q0F"/>
<dbReference type="PDBsum" id="7Q0P"/>
<dbReference type="PDBsum" id="7Q0R"/>
<dbReference type="PDBsum" id="8C3A"/>
<dbReference type="PDBsum" id="8CQ7"/>
<dbReference type="PDBsum" id="8CQW"/>
<dbReference type="PDBsum" id="8CRE"/>
<dbReference type="PDBsum" id="8OEQ"/>
<dbReference type="PDBsum" id="8OGJ"/>
<dbReference type="PDBsum" id="8OH6"/>
<dbReference type="PDBsum" id="8OI5"/>
<dbReference type="PDBsum" id="8OJ3"/>
<dbReference type="PDBsum" id="8Q5I"/>
<dbReference type="EMDB" id="EMD-13737"/>
<dbReference type="EMDB" id="EMD-13741"/>
<dbReference type="EMDB" id="EMD-13744"/>
<dbReference type="EMDB" id="EMD-13749"/>
<dbReference type="EMDB" id="EMD-13750"/>
<dbReference type="EMDB" id="EMD-16874"/>
<dbReference type="SMR" id="A0A1D8PTR4"/>
<dbReference type="FunCoup" id="A0A1D8PTR4">
    <property type="interactions" value="804"/>
</dbReference>
<dbReference type="STRING" id="237561.A0A1D8PTR4"/>
<dbReference type="EnsemblFungi" id="CR_08480C_A-T">
    <property type="protein sequence ID" value="CR_08480C_A-T-p1"/>
    <property type="gene ID" value="CR_08480C_A"/>
</dbReference>
<dbReference type="GeneID" id="30515442"/>
<dbReference type="KEGG" id="cal:CAALFM_CR08480CA"/>
<dbReference type="CGD" id="CAL0000180472">
    <property type="gene designation" value="orf19.6415.1"/>
</dbReference>
<dbReference type="VEuPathDB" id="FungiDB:CR_08480C_A"/>
<dbReference type="eggNOG" id="KOG3506">
    <property type="taxonomic scope" value="Eukaryota"/>
</dbReference>
<dbReference type="InParanoid" id="A0A1D8PTR4"/>
<dbReference type="OMA" id="NDVWNSH"/>
<dbReference type="OrthoDB" id="10252683at2759"/>
<dbReference type="Proteomes" id="UP000000559">
    <property type="component" value="Chromosome R"/>
</dbReference>
<dbReference type="GO" id="GO:0022627">
    <property type="term" value="C:cytosolic small ribosomal subunit"/>
    <property type="evidence" value="ECO:0000318"/>
    <property type="project" value="GO_Central"/>
</dbReference>
<dbReference type="GO" id="GO:0030445">
    <property type="term" value="C:yeast-form cell wall"/>
    <property type="evidence" value="ECO:0000314"/>
    <property type="project" value="CGD"/>
</dbReference>
<dbReference type="GO" id="GO:0003735">
    <property type="term" value="F:structural constituent of ribosome"/>
    <property type="evidence" value="ECO:0000318"/>
    <property type="project" value="GO_Central"/>
</dbReference>
<dbReference type="GO" id="GO:0008270">
    <property type="term" value="F:zinc ion binding"/>
    <property type="evidence" value="ECO:0000318"/>
    <property type="project" value="GO_Central"/>
</dbReference>
<dbReference type="GO" id="GO:0002181">
    <property type="term" value="P:cytoplasmic translation"/>
    <property type="evidence" value="ECO:0000318"/>
    <property type="project" value="GO_Central"/>
</dbReference>
<dbReference type="FunFam" id="4.10.830.10:FF:000002">
    <property type="entry name" value="40S ribosomal protein S29"/>
    <property type="match status" value="1"/>
</dbReference>
<dbReference type="Gene3D" id="4.10.830.10">
    <property type="entry name" value="30s Ribosomal Protein S14, Chain N"/>
    <property type="match status" value="1"/>
</dbReference>
<dbReference type="InterPro" id="IPR001209">
    <property type="entry name" value="Ribosomal_uS14"/>
</dbReference>
<dbReference type="InterPro" id="IPR018271">
    <property type="entry name" value="Ribosomal_uS14_CS"/>
</dbReference>
<dbReference type="InterPro" id="IPR039744">
    <property type="entry name" value="RIbosomal_uS14_euk_arc"/>
</dbReference>
<dbReference type="InterPro" id="IPR043140">
    <property type="entry name" value="Ribosomal_uS14_sf"/>
</dbReference>
<dbReference type="NCBIfam" id="NF004424">
    <property type="entry name" value="PRK05766.1"/>
    <property type="match status" value="1"/>
</dbReference>
<dbReference type="PANTHER" id="PTHR12010">
    <property type="entry name" value="40S RIBOSOMAL PROTEIN S29"/>
    <property type="match status" value="1"/>
</dbReference>
<dbReference type="PANTHER" id="PTHR12010:SF2">
    <property type="entry name" value="40S RIBOSOMAL PROTEIN S29"/>
    <property type="match status" value="1"/>
</dbReference>
<dbReference type="Pfam" id="PF00253">
    <property type="entry name" value="Ribosomal_S14"/>
    <property type="match status" value="1"/>
</dbReference>
<dbReference type="PROSITE" id="PS00527">
    <property type="entry name" value="RIBOSOMAL_S14"/>
    <property type="match status" value="1"/>
</dbReference>
<evidence type="ECO:0000269" key="1">
    <source>
    </source>
</evidence>
<evidence type="ECO:0000303" key="2">
    <source>
    </source>
</evidence>
<evidence type="ECO:0000305" key="3"/>
<evidence type="ECO:0000305" key="4">
    <source>
    </source>
</evidence>
<evidence type="ECO:0007744" key="5">
    <source>
        <dbReference type="PDB" id="7PZY"/>
    </source>
</evidence>
<evidence type="ECO:0007744" key="6">
    <source>
        <dbReference type="PDB" id="7Q0F"/>
    </source>
</evidence>
<evidence type="ECO:0007744" key="7">
    <source>
        <dbReference type="PDB" id="7Q0P"/>
    </source>
</evidence>
<gene>
    <name type="ordered locus">CAALFM_CR08480CA</name>
    <name type="ordered locus">orf19.6415.1</name>
</gene>
<proteinExistence type="evidence at protein level"/>
<name>RS29A_CANAL</name>
<sequence>MAHENVWFSHPRNFGKGSRQCRHCSSHSGLIRKYGLDLCRQCFREKAADIGFNKYR</sequence>
<accession>A0A1D8PTR4</accession>
<reference key="1">
    <citation type="journal article" date="2004" name="Proc. Natl. Acad. Sci. U.S.A.">
        <title>The diploid genome sequence of Candida albicans.</title>
        <authorList>
            <person name="Jones T."/>
            <person name="Federspiel N.A."/>
            <person name="Chibana H."/>
            <person name="Dungan J."/>
            <person name="Kalman S."/>
            <person name="Magee B.B."/>
            <person name="Newport G."/>
            <person name="Thorstenson Y.R."/>
            <person name="Agabian N."/>
            <person name="Magee P.T."/>
            <person name="Davis R.W."/>
            <person name="Scherer S."/>
        </authorList>
    </citation>
    <scope>NUCLEOTIDE SEQUENCE [LARGE SCALE GENOMIC DNA]</scope>
    <source>
        <strain>SC5314 / ATCC MYA-2876</strain>
    </source>
</reference>
<reference key="2">
    <citation type="journal article" date="2007" name="Genome Biol.">
        <title>Assembly of the Candida albicans genome into sixteen supercontigs aligned on the eight chromosomes.</title>
        <authorList>
            <person name="van het Hoog M."/>
            <person name="Rast T.J."/>
            <person name="Martchenko M."/>
            <person name="Grindle S."/>
            <person name="Dignard D."/>
            <person name="Hogues H."/>
            <person name="Cuomo C."/>
            <person name="Berriman M."/>
            <person name="Scherer S."/>
            <person name="Magee B.B."/>
            <person name="Whiteway M."/>
            <person name="Chibana H."/>
            <person name="Nantel A."/>
            <person name="Magee P.T."/>
        </authorList>
    </citation>
    <scope>GENOME REANNOTATION</scope>
    <source>
        <strain>SC5314 / ATCC MYA-2876</strain>
    </source>
</reference>
<reference key="3">
    <citation type="journal article" date="2013" name="Genome Biol.">
        <title>Assembly of a phased diploid Candida albicans genome facilitates allele-specific measurements and provides a simple model for repeat and indel structure.</title>
        <authorList>
            <person name="Muzzey D."/>
            <person name="Schwartz K."/>
            <person name="Weissman J.S."/>
            <person name="Sherlock G."/>
        </authorList>
    </citation>
    <scope>NUCLEOTIDE SEQUENCE [LARGE SCALE GENOMIC DNA]</scope>
    <scope>GENOME REANNOTATION</scope>
    <source>
        <strain>SC5314 / ATCC MYA-2876</strain>
    </source>
</reference>
<reference evidence="5 6 7" key="4">
    <citation type="journal article" date="2022" name="Sci. Adv.">
        <title>E-site drug specificity of the human pathogen Candida albicans ribosome.</title>
        <authorList>
            <person name="Zgadzay Y."/>
            <person name="Kolosova O."/>
            <person name="Stetsenko A."/>
            <person name="Wu C."/>
            <person name="Bruchlen D."/>
            <person name="Usachev K."/>
            <person name="Validov S."/>
            <person name="Jenner L."/>
            <person name="Rogachev A."/>
            <person name="Yusupova G."/>
            <person name="Sachs M.S."/>
            <person name="Guskov A."/>
            <person name="Yusupov M."/>
        </authorList>
    </citation>
    <scope>STRUCTURE BY ELECTRON MICROSCOPY (2.32 ANGSTROMS) OF THE 80S RIBOSOME</scope>
    <scope>SUBUNIT</scope>
    <scope>COFACTOR</scope>
</reference>
<keyword id="KW-0002">3D-structure</keyword>
<keyword id="KW-0963">Cytoplasm</keyword>
<keyword id="KW-1185">Reference proteome</keyword>
<keyword id="KW-0687">Ribonucleoprotein</keyword>
<keyword id="KW-0689">Ribosomal protein</keyword>
<keyword id="KW-0862">Zinc</keyword>